<name>GLYA_ERWT9</name>
<comment type="function">
    <text evidence="1">Catalyzes the reversible interconversion of serine and glycine with tetrahydrofolate (THF) serving as the one-carbon carrier. This reaction serves as the major source of one-carbon groups required for the biosynthesis of purines, thymidylate, methionine, and other important biomolecules. Also exhibits THF-independent aldolase activity toward beta-hydroxyamino acids, producing glycine and aldehydes, via a retro-aldol mechanism.</text>
</comment>
<comment type="catalytic activity">
    <reaction evidence="1">
        <text>(6R)-5,10-methylene-5,6,7,8-tetrahydrofolate + glycine + H2O = (6S)-5,6,7,8-tetrahydrofolate + L-serine</text>
        <dbReference type="Rhea" id="RHEA:15481"/>
        <dbReference type="ChEBI" id="CHEBI:15377"/>
        <dbReference type="ChEBI" id="CHEBI:15636"/>
        <dbReference type="ChEBI" id="CHEBI:33384"/>
        <dbReference type="ChEBI" id="CHEBI:57305"/>
        <dbReference type="ChEBI" id="CHEBI:57453"/>
        <dbReference type="EC" id="2.1.2.1"/>
    </reaction>
</comment>
<comment type="cofactor">
    <cofactor evidence="1">
        <name>pyridoxal 5'-phosphate</name>
        <dbReference type="ChEBI" id="CHEBI:597326"/>
    </cofactor>
</comment>
<comment type="pathway">
    <text evidence="1">One-carbon metabolism; tetrahydrofolate interconversion.</text>
</comment>
<comment type="pathway">
    <text evidence="1">Amino-acid biosynthesis; glycine biosynthesis; glycine from L-serine: step 1/1.</text>
</comment>
<comment type="subunit">
    <text evidence="1">Homodimer.</text>
</comment>
<comment type="subcellular location">
    <subcellularLocation>
        <location evidence="1">Cytoplasm</location>
    </subcellularLocation>
</comment>
<comment type="similarity">
    <text evidence="1">Belongs to the SHMT family.</text>
</comment>
<sequence>MLKRDMNIADYDADLWQAMEQEKVRQEEHIELIASENYTSPRVMQAQGSQLTNKYAEGYPGKRYYGGCEHVDIVEQLAIERAKELFGADYANVQPHSGSQANFAVYTALLQPGDTILGMNLAHGGHLTHGSPVNLSGKLYNVIPYGIDETGKIDYNELAELAKEHQPKMIVGGFSAYSGICDWEKMREIADSIGAYLFVDMAHVAGLVAADVYPNPVPHAHIVTTTTHKTLAGPRGGLILAKGGDEDLYKKLNSGVFPGSQGGPLMHVIAGKAVAFKEAMEPEFKTYQQQVAKNAKAMVEVFLARGYNVVSGGTHNHLFLLDLVDKNLTGKEADAALGRANITVNKNSVPNDPKSPFVTSGIRIGSPAVTRRGFKEAEVRELAGWISDILDNITDEGVSERVKKQVLDICARFPVYA</sequence>
<keyword id="KW-0028">Amino-acid biosynthesis</keyword>
<keyword id="KW-0963">Cytoplasm</keyword>
<keyword id="KW-0554">One-carbon metabolism</keyword>
<keyword id="KW-0663">Pyridoxal phosphate</keyword>
<keyword id="KW-1185">Reference proteome</keyword>
<keyword id="KW-0808">Transferase</keyword>
<proteinExistence type="inferred from homology"/>
<evidence type="ECO:0000255" key="1">
    <source>
        <dbReference type="HAMAP-Rule" id="MF_00051"/>
    </source>
</evidence>
<protein>
    <recommendedName>
        <fullName evidence="1">Serine hydroxymethyltransferase</fullName>
        <shortName evidence="1">SHMT</shortName>
        <shortName evidence="1">Serine methylase</shortName>
        <ecNumber evidence="1">2.1.2.1</ecNumber>
    </recommendedName>
</protein>
<feature type="chain" id="PRO_1000091541" description="Serine hydroxymethyltransferase">
    <location>
        <begin position="1"/>
        <end position="417"/>
    </location>
</feature>
<feature type="binding site" evidence="1">
    <location>
        <position position="121"/>
    </location>
    <ligand>
        <name>(6S)-5,6,7,8-tetrahydrofolate</name>
        <dbReference type="ChEBI" id="CHEBI:57453"/>
    </ligand>
</feature>
<feature type="binding site" evidence="1">
    <location>
        <begin position="125"/>
        <end position="127"/>
    </location>
    <ligand>
        <name>(6S)-5,6,7,8-tetrahydrofolate</name>
        <dbReference type="ChEBI" id="CHEBI:57453"/>
    </ligand>
</feature>
<feature type="binding site" evidence="1">
    <location>
        <begin position="355"/>
        <end position="357"/>
    </location>
    <ligand>
        <name>(6S)-5,6,7,8-tetrahydrofolate</name>
        <dbReference type="ChEBI" id="CHEBI:57453"/>
    </ligand>
</feature>
<feature type="site" description="Plays an important role in substrate specificity" evidence="1">
    <location>
        <position position="228"/>
    </location>
</feature>
<feature type="modified residue" description="N6-(pyridoxal phosphate)lysine" evidence="1">
    <location>
        <position position="229"/>
    </location>
</feature>
<accession>B2VI25</accession>
<reference key="1">
    <citation type="journal article" date="2008" name="Environ. Microbiol.">
        <title>The genome of Erwinia tasmaniensis strain Et1/99, a non-pathogenic bacterium in the genus Erwinia.</title>
        <authorList>
            <person name="Kube M."/>
            <person name="Migdoll A.M."/>
            <person name="Mueller I."/>
            <person name="Kuhl H."/>
            <person name="Beck A."/>
            <person name="Reinhardt R."/>
            <person name="Geider K."/>
        </authorList>
    </citation>
    <scope>NUCLEOTIDE SEQUENCE [LARGE SCALE GENOMIC DNA]</scope>
    <source>
        <strain>DSM 17950 / CFBP 7177 / CIP 109463 / NCPPB 4357 / Et1/99</strain>
    </source>
</reference>
<organism>
    <name type="scientific">Erwinia tasmaniensis (strain DSM 17950 / CFBP 7177 / CIP 109463 / NCPPB 4357 / Et1/99)</name>
    <dbReference type="NCBI Taxonomy" id="465817"/>
    <lineage>
        <taxon>Bacteria</taxon>
        <taxon>Pseudomonadati</taxon>
        <taxon>Pseudomonadota</taxon>
        <taxon>Gammaproteobacteria</taxon>
        <taxon>Enterobacterales</taxon>
        <taxon>Erwiniaceae</taxon>
        <taxon>Erwinia</taxon>
    </lineage>
</organism>
<gene>
    <name evidence="1" type="primary">glyA</name>
    <name type="ordered locus">ETA_10130</name>
</gene>
<dbReference type="EC" id="2.1.2.1" evidence="1"/>
<dbReference type="EMBL" id="CU468135">
    <property type="protein sequence ID" value="CAO96059.1"/>
    <property type="molecule type" value="Genomic_DNA"/>
</dbReference>
<dbReference type="RefSeq" id="WP_012440759.1">
    <property type="nucleotide sequence ID" value="NC_010694.1"/>
</dbReference>
<dbReference type="SMR" id="B2VI25"/>
<dbReference type="STRING" id="465817.ETA_10130"/>
<dbReference type="KEGG" id="eta:ETA_10130"/>
<dbReference type="eggNOG" id="COG0112">
    <property type="taxonomic scope" value="Bacteria"/>
</dbReference>
<dbReference type="HOGENOM" id="CLU_022477_2_1_6"/>
<dbReference type="OrthoDB" id="9803846at2"/>
<dbReference type="UniPathway" id="UPA00193"/>
<dbReference type="UniPathway" id="UPA00288">
    <property type="reaction ID" value="UER01023"/>
</dbReference>
<dbReference type="Proteomes" id="UP000001726">
    <property type="component" value="Chromosome"/>
</dbReference>
<dbReference type="GO" id="GO:0005829">
    <property type="term" value="C:cytosol"/>
    <property type="evidence" value="ECO:0007669"/>
    <property type="project" value="TreeGrafter"/>
</dbReference>
<dbReference type="GO" id="GO:0004372">
    <property type="term" value="F:glycine hydroxymethyltransferase activity"/>
    <property type="evidence" value="ECO:0007669"/>
    <property type="project" value="UniProtKB-UniRule"/>
</dbReference>
<dbReference type="GO" id="GO:0030170">
    <property type="term" value="F:pyridoxal phosphate binding"/>
    <property type="evidence" value="ECO:0007669"/>
    <property type="project" value="UniProtKB-UniRule"/>
</dbReference>
<dbReference type="GO" id="GO:0019264">
    <property type="term" value="P:glycine biosynthetic process from serine"/>
    <property type="evidence" value="ECO:0007669"/>
    <property type="project" value="UniProtKB-UniRule"/>
</dbReference>
<dbReference type="GO" id="GO:0035999">
    <property type="term" value="P:tetrahydrofolate interconversion"/>
    <property type="evidence" value="ECO:0007669"/>
    <property type="project" value="UniProtKB-UniRule"/>
</dbReference>
<dbReference type="CDD" id="cd00378">
    <property type="entry name" value="SHMT"/>
    <property type="match status" value="1"/>
</dbReference>
<dbReference type="FunFam" id="3.40.640.10:FF:000001">
    <property type="entry name" value="Serine hydroxymethyltransferase"/>
    <property type="match status" value="1"/>
</dbReference>
<dbReference type="FunFam" id="3.90.1150.10:FF:000003">
    <property type="entry name" value="Serine hydroxymethyltransferase"/>
    <property type="match status" value="1"/>
</dbReference>
<dbReference type="Gene3D" id="3.90.1150.10">
    <property type="entry name" value="Aspartate Aminotransferase, domain 1"/>
    <property type="match status" value="1"/>
</dbReference>
<dbReference type="Gene3D" id="3.40.640.10">
    <property type="entry name" value="Type I PLP-dependent aspartate aminotransferase-like (Major domain)"/>
    <property type="match status" value="1"/>
</dbReference>
<dbReference type="HAMAP" id="MF_00051">
    <property type="entry name" value="SHMT"/>
    <property type="match status" value="1"/>
</dbReference>
<dbReference type="InterPro" id="IPR015424">
    <property type="entry name" value="PyrdxlP-dep_Trfase"/>
</dbReference>
<dbReference type="InterPro" id="IPR015421">
    <property type="entry name" value="PyrdxlP-dep_Trfase_major"/>
</dbReference>
<dbReference type="InterPro" id="IPR015422">
    <property type="entry name" value="PyrdxlP-dep_Trfase_small"/>
</dbReference>
<dbReference type="InterPro" id="IPR001085">
    <property type="entry name" value="Ser_HO-MeTrfase"/>
</dbReference>
<dbReference type="InterPro" id="IPR049943">
    <property type="entry name" value="Ser_HO-MeTrfase-like"/>
</dbReference>
<dbReference type="InterPro" id="IPR019798">
    <property type="entry name" value="Ser_HO-MeTrfase_PLP_BS"/>
</dbReference>
<dbReference type="InterPro" id="IPR039429">
    <property type="entry name" value="SHMT-like_dom"/>
</dbReference>
<dbReference type="NCBIfam" id="NF000586">
    <property type="entry name" value="PRK00011.1"/>
    <property type="match status" value="1"/>
</dbReference>
<dbReference type="PANTHER" id="PTHR11680">
    <property type="entry name" value="SERINE HYDROXYMETHYLTRANSFERASE"/>
    <property type="match status" value="1"/>
</dbReference>
<dbReference type="PANTHER" id="PTHR11680:SF50">
    <property type="entry name" value="SERINE HYDROXYMETHYLTRANSFERASE"/>
    <property type="match status" value="1"/>
</dbReference>
<dbReference type="Pfam" id="PF00464">
    <property type="entry name" value="SHMT"/>
    <property type="match status" value="1"/>
</dbReference>
<dbReference type="PIRSF" id="PIRSF000412">
    <property type="entry name" value="SHMT"/>
    <property type="match status" value="1"/>
</dbReference>
<dbReference type="SUPFAM" id="SSF53383">
    <property type="entry name" value="PLP-dependent transferases"/>
    <property type="match status" value="1"/>
</dbReference>
<dbReference type="PROSITE" id="PS00096">
    <property type="entry name" value="SHMT"/>
    <property type="match status" value="1"/>
</dbReference>